<proteinExistence type="inferred from homology"/>
<protein>
    <recommendedName>
        <fullName evidence="1">Glycerol-3-phosphate dehydrogenase [NAD(P)+]</fullName>
        <ecNumber evidence="1">1.1.1.94</ecNumber>
    </recommendedName>
    <alternativeName>
        <fullName evidence="1">NAD(P)(+)-dependent glycerol-3-phosphate dehydrogenase</fullName>
    </alternativeName>
    <alternativeName>
        <fullName evidence="1">NAD(P)H-dependent dihydroxyacetone-phosphate reductase</fullName>
    </alternativeName>
</protein>
<organism>
    <name type="scientific">Brucella suis biovar 1 (strain 1330)</name>
    <dbReference type="NCBI Taxonomy" id="204722"/>
    <lineage>
        <taxon>Bacteria</taxon>
        <taxon>Pseudomonadati</taxon>
        <taxon>Pseudomonadota</taxon>
        <taxon>Alphaproteobacteria</taxon>
        <taxon>Hyphomicrobiales</taxon>
        <taxon>Brucellaceae</taxon>
        <taxon>Brucella/Ochrobactrum group</taxon>
        <taxon>Brucella</taxon>
    </lineage>
</organism>
<name>GPDA_BRUSU</name>
<dbReference type="EC" id="1.1.1.94" evidence="1"/>
<dbReference type="EMBL" id="AE014291">
    <property type="protein sequence ID" value="AAN30783.1"/>
    <property type="molecule type" value="Genomic_DNA"/>
</dbReference>
<dbReference type="EMBL" id="CP002997">
    <property type="protein sequence ID" value="AEM19200.1"/>
    <property type="molecule type" value="Genomic_DNA"/>
</dbReference>
<dbReference type="RefSeq" id="WP_002964959.1">
    <property type="nucleotide sequence ID" value="NZ_KN046804.1"/>
</dbReference>
<dbReference type="SMR" id="P64187"/>
<dbReference type="KEGG" id="bms:BR1889"/>
<dbReference type="KEGG" id="bsi:BS1330_I1883"/>
<dbReference type="PATRIC" id="fig|204722.21.peg.2524"/>
<dbReference type="HOGENOM" id="CLU_033449_0_2_5"/>
<dbReference type="PhylomeDB" id="P64187"/>
<dbReference type="UniPathway" id="UPA00940"/>
<dbReference type="Proteomes" id="UP000007104">
    <property type="component" value="Chromosome I"/>
</dbReference>
<dbReference type="GO" id="GO:0005829">
    <property type="term" value="C:cytosol"/>
    <property type="evidence" value="ECO:0007669"/>
    <property type="project" value="TreeGrafter"/>
</dbReference>
<dbReference type="GO" id="GO:0047952">
    <property type="term" value="F:glycerol-3-phosphate dehydrogenase [NAD(P)+] activity"/>
    <property type="evidence" value="ECO:0007669"/>
    <property type="project" value="UniProtKB-UniRule"/>
</dbReference>
<dbReference type="GO" id="GO:0051287">
    <property type="term" value="F:NAD binding"/>
    <property type="evidence" value="ECO:0007669"/>
    <property type="project" value="InterPro"/>
</dbReference>
<dbReference type="GO" id="GO:0005975">
    <property type="term" value="P:carbohydrate metabolic process"/>
    <property type="evidence" value="ECO:0007669"/>
    <property type="project" value="InterPro"/>
</dbReference>
<dbReference type="GO" id="GO:0046167">
    <property type="term" value="P:glycerol-3-phosphate biosynthetic process"/>
    <property type="evidence" value="ECO:0007669"/>
    <property type="project" value="UniProtKB-UniRule"/>
</dbReference>
<dbReference type="GO" id="GO:0046168">
    <property type="term" value="P:glycerol-3-phosphate catabolic process"/>
    <property type="evidence" value="ECO:0007669"/>
    <property type="project" value="InterPro"/>
</dbReference>
<dbReference type="GO" id="GO:0006650">
    <property type="term" value="P:glycerophospholipid metabolic process"/>
    <property type="evidence" value="ECO:0007669"/>
    <property type="project" value="UniProtKB-UniRule"/>
</dbReference>
<dbReference type="GO" id="GO:0008654">
    <property type="term" value="P:phospholipid biosynthetic process"/>
    <property type="evidence" value="ECO:0007669"/>
    <property type="project" value="UniProtKB-KW"/>
</dbReference>
<dbReference type="FunFam" id="3.40.50.720:FF:000019">
    <property type="entry name" value="Glycerol-3-phosphate dehydrogenase [NAD(P)+]"/>
    <property type="match status" value="1"/>
</dbReference>
<dbReference type="Gene3D" id="1.10.1040.10">
    <property type="entry name" value="N-(1-d-carboxylethyl)-l-norvaline Dehydrogenase, domain 2"/>
    <property type="match status" value="1"/>
</dbReference>
<dbReference type="Gene3D" id="3.40.50.720">
    <property type="entry name" value="NAD(P)-binding Rossmann-like Domain"/>
    <property type="match status" value="1"/>
</dbReference>
<dbReference type="HAMAP" id="MF_00394">
    <property type="entry name" value="NAD_Glyc3P_dehydrog"/>
    <property type="match status" value="1"/>
</dbReference>
<dbReference type="InterPro" id="IPR008927">
    <property type="entry name" value="6-PGluconate_DH-like_C_sf"/>
</dbReference>
<dbReference type="InterPro" id="IPR013328">
    <property type="entry name" value="6PGD_dom2"/>
</dbReference>
<dbReference type="InterPro" id="IPR006168">
    <property type="entry name" value="G3P_DH_NAD-dep"/>
</dbReference>
<dbReference type="InterPro" id="IPR006109">
    <property type="entry name" value="G3P_DH_NAD-dep_C"/>
</dbReference>
<dbReference type="InterPro" id="IPR011128">
    <property type="entry name" value="G3P_DH_NAD-dep_N"/>
</dbReference>
<dbReference type="InterPro" id="IPR036291">
    <property type="entry name" value="NAD(P)-bd_dom_sf"/>
</dbReference>
<dbReference type="NCBIfam" id="NF000940">
    <property type="entry name" value="PRK00094.1-2"/>
    <property type="match status" value="1"/>
</dbReference>
<dbReference type="NCBIfam" id="NF000942">
    <property type="entry name" value="PRK00094.1-4"/>
    <property type="match status" value="1"/>
</dbReference>
<dbReference type="PANTHER" id="PTHR11728">
    <property type="entry name" value="GLYCEROL-3-PHOSPHATE DEHYDROGENASE"/>
    <property type="match status" value="1"/>
</dbReference>
<dbReference type="PANTHER" id="PTHR11728:SF1">
    <property type="entry name" value="GLYCEROL-3-PHOSPHATE DEHYDROGENASE [NAD(+)] 2, CHLOROPLASTIC"/>
    <property type="match status" value="1"/>
</dbReference>
<dbReference type="Pfam" id="PF07479">
    <property type="entry name" value="NAD_Gly3P_dh_C"/>
    <property type="match status" value="1"/>
</dbReference>
<dbReference type="Pfam" id="PF01210">
    <property type="entry name" value="NAD_Gly3P_dh_N"/>
    <property type="match status" value="1"/>
</dbReference>
<dbReference type="PIRSF" id="PIRSF000114">
    <property type="entry name" value="Glycerol-3-P_dh"/>
    <property type="match status" value="1"/>
</dbReference>
<dbReference type="PRINTS" id="PR00077">
    <property type="entry name" value="GPDHDRGNASE"/>
</dbReference>
<dbReference type="SUPFAM" id="SSF48179">
    <property type="entry name" value="6-phosphogluconate dehydrogenase C-terminal domain-like"/>
    <property type="match status" value="1"/>
</dbReference>
<dbReference type="SUPFAM" id="SSF51735">
    <property type="entry name" value="NAD(P)-binding Rossmann-fold domains"/>
    <property type="match status" value="1"/>
</dbReference>
<dbReference type="PROSITE" id="PS00957">
    <property type="entry name" value="NAD_G3PDH"/>
    <property type="match status" value="1"/>
</dbReference>
<sequence length="326" mass="33377">MSTKIAVLGGGAWGTALAAMAAKGGHESWLYARDAETVVAINKDRRNPRYLGDITLADGIRASTDAAAVVTGADAVLAVIPAQAMRNGLSELGTLIPQASPIVLCAKGIEQNTGRLMSEVVAEILPDHRIAALSGPSFASDVARGLPTAVTVACEDANTADRLAALLSGPAFRCYSTTDLKGVETGGALKNVLAIAAGAAIGRGYGASAQAALVTRGFAELRRIGQAMSARPETIMGLSGLGDLMLTCSSSQSRNYSYGLALGRGEDLTSRPLAEGVATAPIAAELCRKHNISAPIIDAVGALLDGKITIDEAVTALLNRPLKTED</sequence>
<comment type="function">
    <text evidence="1">Catalyzes the reduction of the glycolytic intermediate dihydroxyacetone phosphate (DHAP) to sn-glycerol 3-phosphate (G3P), the key precursor for phospholipid synthesis.</text>
</comment>
<comment type="catalytic activity">
    <reaction evidence="1">
        <text>sn-glycerol 3-phosphate + NAD(+) = dihydroxyacetone phosphate + NADH + H(+)</text>
        <dbReference type="Rhea" id="RHEA:11092"/>
        <dbReference type="ChEBI" id="CHEBI:15378"/>
        <dbReference type="ChEBI" id="CHEBI:57540"/>
        <dbReference type="ChEBI" id="CHEBI:57597"/>
        <dbReference type="ChEBI" id="CHEBI:57642"/>
        <dbReference type="ChEBI" id="CHEBI:57945"/>
        <dbReference type="EC" id="1.1.1.94"/>
    </reaction>
    <physiologicalReaction direction="right-to-left" evidence="1">
        <dbReference type="Rhea" id="RHEA:11094"/>
    </physiologicalReaction>
</comment>
<comment type="catalytic activity">
    <reaction evidence="1">
        <text>sn-glycerol 3-phosphate + NADP(+) = dihydroxyacetone phosphate + NADPH + H(+)</text>
        <dbReference type="Rhea" id="RHEA:11096"/>
        <dbReference type="ChEBI" id="CHEBI:15378"/>
        <dbReference type="ChEBI" id="CHEBI:57597"/>
        <dbReference type="ChEBI" id="CHEBI:57642"/>
        <dbReference type="ChEBI" id="CHEBI:57783"/>
        <dbReference type="ChEBI" id="CHEBI:58349"/>
        <dbReference type="EC" id="1.1.1.94"/>
    </reaction>
    <physiologicalReaction direction="right-to-left" evidence="1">
        <dbReference type="Rhea" id="RHEA:11098"/>
    </physiologicalReaction>
</comment>
<comment type="pathway">
    <text evidence="1">Membrane lipid metabolism; glycerophospholipid metabolism.</text>
</comment>
<comment type="subcellular location">
    <subcellularLocation>
        <location evidence="1">Cytoplasm</location>
    </subcellularLocation>
</comment>
<comment type="similarity">
    <text evidence="1">Belongs to the NAD-dependent glycerol-3-phosphate dehydrogenase family.</text>
</comment>
<accession>P64187</accession>
<accession>G0K7V4</accession>
<accession>Q8YJB2</accession>
<gene>
    <name evidence="1" type="primary">gpsA</name>
    <name type="ordered locus">BR1889</name>
    <name type="ordered locus">BS1330_I1883</name>
</gene>
<feature type="chain" id="PRO_0000137935" description="Glycerol-3-phosphate dehydrogenase [NAD(P)+]">
    <location>
        <begin position="1"/>
        <end position="326"/>
    </location>
</feature>
<feature type="active site" description="Proton acceptor" evidence="1">
    <location>
        <position position="190"/>
    </location>
</feature>
<feature type="binding site" evidence="1">
    <location>
        <position position="13"/>
    </location>
    <ligand>
        <name>NADPH</name>
        <dbReference type="ChEBI" id="CHEBI:57783"/>
    </ligand>
</feature>
<feature type="binding site" evidence="1">
    <location>
        <position position="33"/>
    </location>
    <ligand>
        <name>NADPH</name>
        <dbReference type="ChEBI" id="CHEBI:57783"/>
    </ligand>
</feature>
<feature type="binding site" evidence="1">
    <location>
        <position position="107"/>
    </location>
    <ligand>
        <name>NADPH</name>
        <dbReference type="ChEBI" id="CHEBI:57783"/>
    </ligand>
</feature>
<feature type="binding site" evidence="1">
    <location>
        <position position="107"/>
    </location>
    <ligand>
        <name>sn-glycerol 3-phosphate</name>
        <dbReference type="ChEBI" id="CHEBI:57597"/>
    </ligand>
</feature>
<feature type="binding site" evidence="1">
    <location>
        <position position="135"/>
    </location>
    <ligand>
        <name>sn-glycerol 3-phosphate</name>
        <dbReference type="ChEBI" id="CHEBI:57597"/>
    </ligand>
</feature>
<feature type="binding site" evidence="1">
    <location>
        <position position="137"/>
    </location>
    <ligand>
        <name>sn-glycerol 3-phosphate</name>
        <dbReference type="ChEBI" id="CHEBI:57597"/>
    </ligand>
</feature>
<feature type="binding site" evidence="1">
    <location>
        <position position="139"/>
    </location>
    <ligand>
        <name>NADPH</name>
        <dbReference type="ChEBI" id="CHEBI:57783"/>
    </ligand>
</feature>
<feature type="binding site" evidence="1">
    <location>
        <position position="190"/>
    </location>
    <ligand>
        <name>sn-glycerol 3-phosphate</name>
        <dbReference type="ChEBI" id="CHEBI:57597"/>
    </ligand>
</feature>
<feature type="binding site" evidence="1">
    <location>
        <position position="243"/>
    </location>
    <ligand>
        <name>sn-glycerol 3-phosphate</name>
        <dbReference type="ChEBI" id="CHEBI:57597"/>
    </ligand>
</feature>
<feature type="binding site" evidence="1">
    <location>
        <position position="253"/>
    </location>
    <ligand>
        <name>sn-glycerol 3-phosphate</name>
        <dbReference type="ChEBI" id="CHEBI:57597"/>
    </ligand>
</feature>
<feature type="binding site" evidence="1">
    <location>
        <position position="254"/>
    </location>
    <ligand>
        <name>NADPH</name>
        <dbReference type="ChEBI" id="CHEBI:57783"/>
    </ligand>
</feature>
<feature type="binding site" evidence="1">
    <location>
        <position position="254"/>
    </location>
    <ligand>
        <name>sn-glycerol 3-phosphate</name>
        <dbReference type="ChEBI" id="CHEBI:57597"/>
    </ligand>
</feature>
<feature type="binding site" evidence="1">
    <location>
        <position position="255"/>
    </location>
    <ligand>
        <name>sn-glycerol 3-phosphate</name>
        <dbReference type="ChEBI" id="CHEBI:57597"/>
    </ligand>
</feature>
<feature type="binding site" evidence="1">
    <location>
        <position position="273"/>
    </location>
    <ligand>
        <name>NADPH</name>
        <dbReference type="ChEBI" id="CHEBI:57783"/>
    </ligand>
</feature>
<feature type="binding site" evidence="1">
    <location>
        <position position="275"/>
    </location>
    <ligand>
        <name>NADPH</name>
        <dbReference type="ChEBI" id="CHEBI:57783"/>
    </ligand>
</feature>
<keyword id="KW-0963">Cytoplasm</keyword>
<keyword id="KW-0444">Lipid biosynthesis</keyword>
<keyword id="KW-0443">Lipid metabolism</keyword>
<keyword id="KW-0520">NAD</keyword>
<keyword id="KW-0521">NADP</keyword>
<keyword id="KW-0547">Nucleotide-binding</keyword>
<keyword id="KW-0560">Oxidoreductase</keyword>
<keyword id="KW-0594">Phospholipid biosynthesis</keyword>
<keyword id="KW-1208">Phospholipid metabolism</keyword>
<reference key="1">
    <citation type="journal article" date="2002" name="Proc. Natl. Acad. Sci. U.S.A.">
        <title>The Brucella suis genome reveals fundamental similarities between animal and plant pathogens and symbionts.</title>
        <authorList>
            <person name="Paulsen I.T."/>
            <person name="Seshadri R."/>
            <person name="Nelson K.E."/>
            <person name="Eisen J.A."/>
            <person name="Heidelberg J.F."/>
            <person name="Read T.D."/>
            <person name="Dodson R.J."/>
            <person name="Umayam L.A."/>
            <person name="Brinkac L.M."/>
            <person name="Beanan M.J."/>
            <person name="Daugherty S.C."/>
            <person name="DeBoy R.T."/>
            <person name="Durkin A.S."/>
            <person name="Kolonay J.F."/>
            <person name="Madupu R."/>
            <person name="Nelson W.C."/>
            <person name="Ayodeji B."/>
            <person name="Kraul M."/>
            <person name="Shetty J."/>
            <person name="Malek J.A."/>
            <person name="Van Aken S.E."/>
            <person name="Riedmuller S."/>
            <person name="Tettelin H."/>
            <person name="Gill S.R."/>
            <person name="White O."/>
            <person name="Salzberg S.L."/>
            <person name="Hoover D.L."/>
            <person name="Lindler L.E."/>
            <person name="Halling S.M."/>
            <person name="Boyle S.M."/>
            <person name="Fraser C.M."/>
        </authorList>
    </citation>
    <scope>NUCLEOTIDE SEQUENCE [LARGE SCALE GENOMIC DNA]</scope>
    <source>
        <strain>1330</strain>
    </source>
</reference>
<reference key="2">
    <citation type="journal article" date="2011" name="J. Bacteriol.">
        <title>Revised genome sequence of Brucella suis 1330.</title>
        <authorList>
            <person name="Tae H."/>
            <person name="Shallom S."/>
            <person name="Settlage R."/>
            <person name="Preston D."/>
            <person name="Adams L.G."/>
            <person name="Garner H.R."/>
        </authorList>
    </citation>
    <scope>NUCLEOTIDE SEQUENCE [LARGE SCALE GENOMIC DNA]</scope>
    <source>
        <strain>1330</strain>
    </source>
</reference>
<evidence type="ECO:0000255" key="1">
    <source>
        <dbReference type="HAMAP-Rule" id="MF_00394"/>
    </source>
</evidence>